<gene>
    <name evidence="1" type="primary">rplV</name>
    <name type="ordered locus">Ecaj_0607</name>
</gene>
<proteinExistence type="inferred from homology"/>
<name>RL22_EHRCJ</name>
<keyword id="KW-0687">Ribonucleoprotein</keyword>
<keyword id="KW-0689">Ribosomal protein</keyword>
<keyword id="KW-0694">RNA-binding</keyword>
<keyword id="KW-0699">rRNA-binding</keyword>
<dbReference type="EMBL" id="CP000107">
    <property type="protein sequence ID" value="AAZ68641.1"/>
    <property type="molecule type" value="Genomic_DNA"/>
</dbReference>
<dbReference type="RefSeq" id="WP_011304719.1">
    <property type="nucleotide sequence ID" value="NC_007354.1"/>
</dbReference>
<dbReference type="SMR" id="Q3YRL4"/>
<dbReference type="FunCoup" id="Q3YRL4">
    <property type="interactions" value="315"/>
</dbReference>
<dbReference type="STRING" id="269484.Ecaj_0607"/>
<dbReference type="KEGG" id="ecn:Ecaj_0607"/>
<dbReference type="eggNOG" id="COG0091">
    <property type="taxonomic scope" value="Bacteria"/>
</dbReference>
<dbReference type="HOGENOM" id="CLU_083987_3_0_5"/>
<dbReference type="InParanoid" id="Q3YRL4"/>
<dbReference type="Proteomes" id="UP000000435">
    <property type="component" value="Chromosome"/>
</dbReference>
<dbReference type="GO" id="GO:0022625">
    <property type="term" value="C:cytosolic large ribosomal subunit"/>
    <property type="evidence" value="ECO:0007669"/>
    <property type="project" value="TreeGrafter"/>
</dbReference>
<dbReference type="GO" id="GO:0019843">
    <property type="term" value="F:rRNA binding"/>
    <property type="evidence" value="ECO:0007669"/>
    <property type="project" value="UniProtKB-UniRule"/>
</dbReference>
<dbReference type="GO" id="GO:0003735">
    <property type="term" value="F:structural constituent of ribosome"/>
    <property type="evidence" value="ECO:0007669"/>
    <property type="project" value="InterPro"/>
</dbReference>
<dbReference type="GO" id="GO:0006412">
    <property type="term" value="P:translation"/>
    <property type="evidence" value="ECO:0007669"/>
    <property type="project" value="UniProtKB-UniRule"/>
</dbReference>
<dbReference type="CDD" id="cd00336">
    <property type="entry name" value="Ribosomal_L22"/>
    <property type="match status" value="1"/>
</dbReference>
<dbReference type="Gene3D" id="3.90.470.10">
    <property type="entry name" value="Ribosomal protein L22/L17"/>
    <property type="match status" value="1"/>
</dbReference>
<dbReference type="HAMAP" id="MF_01331_B">
    <property type="entry name" value="Ribosomal_uL22_B"/>
    <property type="match status" value="1"/>
</dbReference>
<dbReference type="InterPro" id="IPR001063">
    <property type="entry name" value="Ribosomal_uL22"/>
</dbReference>
<dbReference type="InterPro" id="IPR005727">
    <property type="entry name" value="Ribosomal_uL22_bac/chlpt-type"/>
</dbReference>
<dbReference type="InterPro" id="IPR047867">
    <property type="entry name" value="Ribosomal_uL22_bac/org-type"/>
</dbReference>
<dbReference type="InterPro" id="IPR018260">
    <property type="entry name" value="Ribosomal_uL22_CS"/>
</dbReference>
<dbReference type="InterPro" id="IPR036394">
    <property type="entry name" value="Ribosomal_uL22_sf"/>
</dbReference>
<dbReference type="NCBIfam" id="TIGR01044">
    <property type="entry name" value="rplV_bact"/>
    <property type="match status" value="1"/>
</dbReference>
<dbReference type="PANTHER" id="PTHR13501">
    <property type="entry name" value="CHLOROPLAST 50S RIBOSOMAL PROTEIN L22-RELATED"/>
    <property type="match status" value="1"/>
</dbReference>
<dbReference type="PANTHER" id="PTHR13501:SF8">
    <property type="entry name" value="LARGE RIBOSOMAL SUBUNIT PROTEIN UL22M"/>
    <property type="match status" value="1"/>
</dbReference>
<dbReference type="Pfam" id="PF00237">
    <property type="entry name" value="Ribosomal_L22"/>
    <property type="match status" value="1"/>
</dbReference>
<dbReference type="SUPFAM" id="SSF54843">
    <property type="entry name" value="Ribosomal protein L22"/>
    <property type="match status" value="1"/>
</dbReference>
<dbReference type="PROSITE" id="PS00464">
    <property type="entry name" value="RIBOSOMAL_L22"/>
    <property type="match status" value="1"/>
</dbReference>
<reference key="1">
    <citation type="journal article" date="2006" name="J. Bacteriol.">
        <title>The genome of the obligately intracellular bacterium Ehrlichia canis reveals themes of complex membrane structure and immune evasion strategies.</title>
        <authorList>
            <person name="Mavromatis K."/>
            <person name="Doyle C.K."/>
            <person name="Lykidis A."/>
            <person name="Ivanova N."/>
            <person name="Francino M.P."/>
            <person name="Chain P."/>
            <person name="Shin M."/>
            <person name="Malfatti S."/>
            <person name="Larimer F."/>
            <person name="Copeland A."/>
            <person name="Detter J.C."/>
            <person name="Land M."/>
            <person name="Richardson P.M."/>
            <person name="Yu X.J."/>
            <person name="Walker D.H."/>
            <person name="McBride J.W."/>
            <person name="Kyrpides N.C."/>
        </authorList>
    </citation>
    <scope>NUCLEOTIDE SEQUENCE [LARGE SCALE GENOMIC DNA]</scope>
    <source>
        <strain>Jake</strain>
    </source>
</reference>
<protein>
    <recommendedName>
        <fullName evidence="1">Large ribosomal subunit protein uL22</fullName>
    </recommendedName>
    <alternativeName>
        <fullName evidence="2">50S ribosomal protein L22</fullName>
    </alternativeName>
</protein>
<accession>Q3YRL4</accession>
<comment type="function">
    <text evidence="1">This protein binds specifically to 23S rRNA; its binding is stimulated by other ribosomal proteins, e.g. L4, L17, and L20. It is important during the early stages of 50S assembly. It makes multiple contacts with different domains of the 23S rRNA in the assembled 50S subunit and ribosome (By similarity).</text>
</comment>
<comment type="function">
    <text evidence="1">The globular domain of the protein is located near the polypeptide exit tunnel on the outside of the subunit, while an extended beta-hairpin is found that lines the wall of the exit tunnel in the center of the 70S ribosome.</text>
</comment>
<comment type="subunit">
    <text evidence="1">Part of the 50S ribosomal subunit.</text>
</comment>
<comment type="similarity">
    <text evidence="1">Belongs to the universal ribosomal protein uL22 family.</text>
</comment>
<evidence type="ECO:0000255" key="1">
    <source>
        <dbReference type="HAMAP-Rule" id="MF_01331"/>
    </source>
</evidence>
<evidence type="ECO:0000305" key="2"/>
<feature type="chain" id="PRO_0000354464" description="Large ribosomal subunit protein uL22">
    <location>
        <begin position="1"/>
        <end position="114"/>
    </location>
</feature>
<organism>
    <name type="scientific">Ehrlichia canis (strain Jake)</name>
    <dbReference type="NCBI Taxonomy" id="269484"/>
    <lineage>
        <taxon>Bacteria</taxon>
        <taxon>Pseudomonadati</taxon>
        <taxon>Pseudomonadota</taxon>
        <taxon>Alphaproteobacteria</taxon>
        <taxon>Rickettsiales</taxon>
        <taxon>Anaplasmataceae</taxon>
        <taxon>Ehrlichia</taxon>
    </lineage>
</organism>
<sequence>MGKVLVEAKGIGLRSTPSKLNLVADLIRGKDVSVAMMYLKFCKKKSAGYISKVLKSAVANAQANYNVDLDNLYVKEVLVGKSFSLRRVHARARGKACRVHKHYGNVIIKLFERI</sequence>